<dbReference type="EC" id="2.3.2.27" evidence="2"/>
<dbReference type="EMBL" id="AF169300">
    <property type="protein sequence ID" value="AAF00620.1"/>
    <property type="molecule type" value="mRNA"/>
</dbReference>
<dbReference type="EMBL" id="AK019171">
    <property type="protein sequence ID" value="BAB31585.1"/>
    <property type="molecule type" value="mRNA"/>
</dbReference>
<dbReference type="EMBL" id="AK090162">
    <property type="protein sequence ID" value="BAC41119.1"/>
    <property type="molecule type" value="mRNA"/>
</dbReference>
<dbReference type="EMBL" id="AK147057">
    <property type="protein sequence ID" value="BAE27641.1"/>
    <property type="molecule type" value="mRNA"/>
</dbReference>
<dbReference type="EMBL" id="AK151116">
    <property type="protein sequence ID" value="BAE30125.1"/>
    <property type="molecule type" value="mRNA"/>
</dbReference>
<dbReference type="EMBL" id="AK158987">
    <property type="protein sequence ID" value="BAE34757.1"/>
    <property type="molecule type" value="mRNA"/>
</dbReference>
<dbReference type="EMBL" id="AK159778">
    <property type="protein sequence ID" value="BAE35362.1"/>
    <property type="molecule type" value="mRNA"/>
</dbReference>
<dbReference type="EMBL" id="AK159949">
    <property type="protein sequence ID" value="BAE35505.1"/>
    <property type="molecule type" value="mRNA"/>
</dbReference>
<dbReference type="EMBL" id="BC003282">
    <property type="protein sequence ID" value="AAH03282.1"/>
    <property type="molecule type" value="mRNA"/>
</dbReference>
<dbReference type="EMBL" id="U95141">
    <property type="protein sequence ID" value="AAC53539.1"/>
    <property type="molecule type" value="mRNA"/>
</dbReference>
<dbReference type="CCDS" id="CCDS57336.1"/>
<dbReference type="RefSeq" id="NP_001291198.1">
    <property type="nucleotide sequence ID" value="NM_001304269.1"/>
</dbReference>
<dbReference type="RefSeq" id="NP_001291199.1">
    <property type="nucleotide sequence ID" value="NM_001304270.1"/>
</dbReference>
<dbReference type="RefSeq" id="NP_035408.1">
    <property type="nucleotide sequence ID" value="NM_011278.5"/>
</dbReference>
<dbReference type="PDB" id="2MP2">
    <property type="method" value="NMR"/>
    <property type="chains" value="C=45-69"/>
</dbReference>
<dbReference type="PDBsum" id="2MP2"/>
<dbReference type="BMRB" id="Q9QZS2"/>
<dbReference type="SMR" id="Q9QZS2"/>
<dbReference type="BioGRID" id="202920">
    <property type="interactions" value="8"/>
</dbReference>
<dbReference type="FunCoup" id="Q9QZS2">
    <property type="interactions" value="4147"/>
</dbReference>
<dbReference type="IntAct" id="Q9QZS2">
    <property type="interactions" value="1"/>
</dbReference>
<dbReference type="MINT" id="Q9QZS2"/>
<dbReference type="STRING" id="10090.ENSMUSP00000138555"/>
<dbReference type="iPTMnet" id="Q9QZS2"/>
<dbReference type="PhosphoSitePlus" id="Q9QZS2"/>
<dbReference type="jPOST" id="Q9QZS2"/>
<dbReference type="PaxDb" id="10090-ENSMUSP00000138555"/>
<dbReference type="ProteomicsDB" id="260989"/>
<dbReference type="Pumba" id="Q9QZS2"/>
<dbReference type="Antibodypedia" id="22369">
    <property type="antibodies" value="134 antibodies from 24 providers"/>
</dbReference>
<dbReference type="DNASU" id="19822"/>
<dbReference type="Ensembl" id="ENSMUST00000030992.13">
    <property type="protein sequence ID" value="ENSMUSP00000030992.6"/>
    <property type="gene ID" value="ENSMUSG00000029110.14"/>
</dbReference>
<dbReference type="Ensembl" id="ENSMUST00000182047.2">
    <property type="protein sequence ID" value="ENSMUSP00000138411.2"/>
    <property type="gene ID" value="ENSMUSG00000029110.14"/>
</dbReference>
<dbReference type="Ensembl" id="ENSMUST00000182709.8">
    <property type="protein sequence ID" value="ENSMUSP00000138555.2"/>
    <property type="gene ID" value="ENSMUSG00000029110.14"/>
</dbReference>
<dbReference type="GeneID" id="19822"/>
<dbReference type="KEGG" id="mmu:19822"/>
<dbReference type="UCSC" id="uc008xcc.2">
    <property type="organism name" value="mouse"/>
</dbReference>
<dbReference type="AGR" id="MGI:1201691"/>
<dbReference type="CTD" id="6047"/>
<dbReference type="MGI" id="MGI:1201691">
    <property type="gene designation" value="Rnf4"/>
</dbReference>
<dbReference type="VEuPathDB" id="HostDB:ENSMUSG00000029110"/>
<dbReference type="eggNOG" id="KOG0320">
    <property type="taxonomic scope" value="Eukaryota"/>
</dbReference>
<dbReference type="GeneTree" id="ENSGT00390000010318"/>
<dbReference type="HOGENOM" id="CLU_106856_0_0_1"/>
<dbReference type="InParanoid" id="Q9QZS2"/>
<dbReference type="OMA" id="ICMDVYS"/>
<dbReference type="OrthoDB" id="6105938at2759"/>
<dbReference type="PhylomeDB" id="Q9QZS2"/>
<dbReference type="TreeFam" id="TF328387"/>
<dbReference type="Reactome" id="R-MMU-5693607">
    <property type="pathway name" value="Processing of DNA double-strand break ends"/>
</dbReference>
<dbReference type="Reactome" id="R-MMU-983168">
    <property type="pathway name" value="Antigen processing: Ubiquitination &amp; Proteasome degradation"/>
</dbReference>
<dbReference type="UniPathway" id="UPA00143"/>
<dbReference type="BioGRID-ORCS" id="19822">
    <property type="hits" value="17 hits in 78 CRISPR screens"/>
</dbReference>
<dbReference type="ChiTaRS" id="Rnf4">
    <property type="organism name" value="mouse"/>
</dbReference>
<dbReference type="EvolutionaryTrace" id="Q9QZS2"/>
<dbReference type="PRO" id="PR:Q9QZS2"/>
<dbReference type="Proteomes" id="UP000000589">
    <property type="component" value="Chromosome 5"/>
</dbReference>
<dbReference type="RNAct" id="Q9QZS2">
    <property type="molecule type" value="protein"/>
</dbReference>
<dbReference type="Bgee" id="ENSMUSG00000029110">
    <property type="expression patterns" value="Expressed in seminiferous tubule of testis and 267 other cell types or tissues"/>
</dbReference>
<dbReference type="ExpressionAtlas" id="Q9QZS2">
    <property type="expression patterns" value="baseline and differential"/>
</dbReference>
<dbReference type="GO" id="GO:0005737">
    <property type="term" value="C:cytoplasm"/>
    <property type="evidence" value="ECO:0000314"/>
    <property type="project" value="MGI"/>
</dbReference>
<dbReference type="GO" id="GO:1990752">
    <property type="term" value="C:microtubule end"/>
    <property type="evidence" value="ECO:0007669"/>
    <property type="project" value="Ensembl"/>
</dbReference>
<dbReference type="GO" id="GO:0005634">
    <property type="term" value="C:nucleus"/>
    <property type="evidence" value="ECO:0000314"/>
    <property type="project" value="MGI"/>
</dbReference>
<dbReference type="GO" id="GO:0016605">
    <property type="term" value="C:PML body"/>
    <property type="evidence" value="ECO:0007669"/>
    <property type="project" value="UniProtKB-SubCell"/>
</dbReference>
<dbReference type="GO" id="GO:0003677">
    <property type="term" value="F:DNA binding"/>
    <property type="evidence" value="ECO:0000250"/>
    <property type="project" value="UniProtKB"/>
</dbReference>
<dbReference type="GO" id="GO:0042802">
    <property type="term" value="F:identical protein binding"/>
    <property type="evidence" value="ECO:0007669"/>
    <property type="project" value="Ensembl"/>
</dbReference>
<dbReference type="GO" id="GO:0031491">
    <property type="term" value="F:nucleosome binding"/>
    <property type="evidence" value="ECO:0000250"/>
    <property type="project" value="UniProtKB"/>
</dbReference>
<dbReference type="GO" id="GO:0032184">
    <property type="term" value="F:SUMO polymer binding"/>
    <property type="evidence" value="ECO:0000250"/>
    <property type="project" value="UniProtKB"/>
</dbReference>
<dbReference type="GO" id="GO:0061630">
    <property type="term" value="F:ubiquitin protein ligase activity"/>
    <property type="evidence" value="ECO:0000250"/>
    <property type="project" value="UniProtKB"/>
</dbReference>
<dbReference type="GO" id="GO:0004842">
    <property type="term" value="F:ubiquitin-protein transferase activity"/>
    <property type="evidence" value="ECO:0000250"/>
    <property type="project" value="UniProtKB"/>
</dbReference>
<dbReference type="GO" id="GO:0008270">
    <property type="term" value="F:zinc ion binding"/>
    <property type="evidence" value="ECO:0007669"/>
    <property type="project" value="UniProtKB-KW"/>
</dbReference>
<dbReference type="GO" id="GO:0120186">
    <property type="term" value="P:negative regulation of protein localization to chromatin"/>
    <property type="evidence" value="ECO:0007669"/>
    <property type="project" value="Ensembl"/>
</dbReference>
<dbReference type="GO" id="GO:0045893">
    <property type="term" value="P:positive regulation of DNA-templated transcription"/>
    <property type="evidence" value="ECO:0000250"/>
    <property type="project" value="UniProtKB"/>
</dbReference>
<dbReference type="GO" id="GO:0045944">
    <property type="term" value="P:positive regulation of transcription by RNA polymerase II"/>
    <property type="evidence" value="ECO:0000314"/>
    <property type="project" value="MGI"/>
</dbReference>
<dbReference type="GO" id="GO:0043161">
    <property type="term" value="P:proteasome-mediated ubiquitin-dependent protein catabolic process"/>
    <property type="evidence" value="ECO:0000250"/>
    <property type="project" value="UniProtKB"/>
</dbReference>
<dbReference type="GO" id="GO:0051865">
    <property type="term" value="P:protein autoubiquitination"/>
    <property type="evidence" value="ECO:0000250"/>
    <property type="project" value="UniProtKB"/>
</dbReference>
<dbReference type="GO" id="GO:0070979">
    <property type="term" value="P:protein K11-linked ubiquitination"/>
    <property type="evidence" value="ECO:0000250"/>
    <property type="project" value="UniProtKB"/>
</dbReference>
<dbReference type="GO" id="GO:0070936">
    <property type="term" value="P:protein K48-linked ubiquitination"/>
    <property type="evidence" value="ECO:0000250"/>
    <property type="project" value="UniProtKB"/>
</dbReference>
<dbReference type="GO" id="GO:0085020">
    <property type="term" value="P:protein K6-linked ubiquitination"/>
    <property type="evidence" value="ECO:0000250"/>
    <property type="project" value="UniProtKB"/>
</dbReference>
<dbReference type="GO" id="GO:0070534">
    <property type="term" value="P:protein K63-linked ubiquitination"/>
    <property type="evidence" value="ECO:0000250"/>
    <property type="project" value="UniProtKB"/>
</dbReference>
<dbReference type="GO" id="GO:0090234">
    <property type="term" value="P:regulation of kinetochore assembly"/>
    <property type="evidence" value="ECO:0000250"/>
    <property type="project" value="UniProtKB"/>
</dbReference>
<dbReference type="GO" id="GO:0090169">
    <property type="term" value="P:regulation of spindle assembly"/>
    <property type="evidence" value="ECO:0000250"/>
    <property type="project" value="UniProtKB"/>
</dbReference>
<dbReference type="GO" id="GO:0046685">
    <property type="term" value="P:response to arsenic-containing substance"/>
    <property type="evidence" value="ECO:0007669"/>
    <property type="project" value="Ensembl"/>
</dbReference>
<dbReference type="CDD" id="cd16533">
    <property type="entry name" value="RING-HC_RNF4"/>
    <property type="match status" value="1"/>
</dbReference>
<dbReference type="FunFam" id="3.30.40.10:FF:000173">
    <property type="entry name" value="E3 ubiquitin-protein ligase RNF4"/>
    <property type="match status" value="1"/>
</dbReference>
<dbReference type="Gene3D" id="3.30.40.10">
    <property type="entry name" value="Zinc/RING finger domain, C3HC4 (zinc finger)"/>
    <property type="match status" value="1"/>
</dbReference>
<dbReference type="InterPro" id="IPR043295">
    <property type="entry name" value="RING-HC_RNF4"/>
</dbReference>
<dbReference type="InterPro" id="IPR047134">
    <property type="entry name" value="RNF4"/>
</dbReference>
<dbReference type="InterPro" id="IPR001841">
    <property type="entry name" value="Znf_RING"/>
</dbReference>
<dbReference type="InterPro" id="IPR013083">
    <property type="entry name" value="Znf_RING/FYVE/PHD"/>
</dbReference>
<dbReference type="InterPro" id="IPR017907">
    <property type="entry name" value="Znf_RING_CS"/>
</dbReference>
<dbReference type="PANTHER" id="PTHR23041:SF78">
    <property type="entry name" value="E3 UBIQUITIN-PROTEIN LIGASE RNF4"/>
    <property type="match status" value="1"/>
</dbReference>
<dbReference type="PANTHER" id="PTHR23041">
    <property type="entry name" value="RING FINGER DOMAIN-CONTAINING"/>
    <property type="match status" value="1"/>
</dbReference>
<dbReference type="Pfam" id="PF13639">
    <property type="entry name" value="zf-RING_2"/>
    <property type="match status" value="1"/>
</dbReference>
<dbReference type="SMART" id="SM00184">
    <property type="entry name" value="RING"/>
    <property type="match status" value="1"/>
</dbReference>
<dbReference type="SUPFAM" id="SSF57850">
    <property type="entry name" value="RING/U-box"/>
    <property type="match status" value="1"/>
</dbReference>
<dbReference type="PROSITE" id="PS00518">
    <property type="entry name" value="ZF_RING_1"/>
    <property type="match status" value="1"/>
</dbReference>
<dbReference type="PROSITE" id="PS50089">
    <property type="entry name" value="ZF_RING_2"/>
    <property type="match status" value="1"/>
</dbReference>
<accession>Q9QZS2</accession>
<accession>O35941</accession>
<accession>Q541Z6</accession>
<comment type="function">
    <text evidence="2 8">E3 ubiquitin-protein ligase which binds polysumoylated chains covalently attached to proteins and mediates 'Lys-6'-, 'Lys-11'-, 'Lys-48'- and 'Lys-63'-linked polyubiquitination of those substrates and their subsequent targeting to the proteasome for degradation (PubMed:20681948). Regulates the degradation of several proteins including PML and the transcriptional activator PEA3 (By similarity). Involved in chromosome alignment and spindle assembly, it regulates the kinetochore CENPH-CENPI-CENPK complex by targeting polysumoylated CENPI to proteasomal degradation (By similarity). Regulates the cellular responses to hypoxia and heat shock through degradation of respectively EPAS1 and PARP1 (By similarity). Alternatively, it may also bind DNA/nucleosomes and have a more direct role in the regulation of transcription for instance enhancing basal transcription and steroid receptor-mediated transcriptional activation (By similarity). Catalyzes ubiquitination of sumoylated PARP1 in response to PARP1 trapping to chromatin, leading to PARP1 removal from chromatin by VCP/p97 (By similarity).</text>
</comment>
<comment type="catalytic activity">
    <reaction evidence="2">
        <text>S-ubiquitinyl-[E2 ubiquitin-conjugating enzyme]-L-cysteine + [acceptor protein]-L-lysine = [E2 ubiquitin-conjugating enzyme]-L-cysteine + N(6)-ubiquitinyl-[acceptor protein]-L-lysine.</text>
        <dbReference type="EC" id="2.3.2.27"/>
    </reaction>
</comment>
<comment type="pathway">
    <text evidence="8">Protein modification; protein ubiquitination.</text>
</comment>
<comment type="subunit">
    <text evidence="1 2 5 6 7 8">Homodimer (via RING-type zinc finger domain) (PubMed:20681948). Interacts with GSC2 (PubMed:10822263). Interacts with AR/the androgen receptor and TBP (By similarity). Interacts with TCF20 (PubMed:10849425). Interacts with PATZ1 (By similarity). Interacts with TRPS1; negatively regulates TRPS1 transcriptional repressor activity (PubMed:12885770). Interacts with PML (isoform PML-1, isoform PML-2, isoform PML-3, isoform PML-4, isoform PML-5 and isoform PML-6). Interacts with PRDM1/Blimp-1 (By similarity).</text>
</comment>
<comment type="subcellular location">
    <subcellularLocation>
        <location evidence="5">Cytoplasm</location>
    </subcellularLocation>
    <subcellularLocation>
        <location evidence="5 6">Nucleus</location>
    </subcellularLocation>
    <subcellularLocation>
        <location evidence="2">Nucleus</location>
        <location evidence="2">PML body</location>
    </subcellularLocation>
</comment>
<comment type="tissue specificity">
    <text evidence="5 9">In the embryo, expressed primarily in the developing nervous system with strong expression in the dorsal root ganglia and gonads (PubMed:10822263, PubMed:9479498). Ubiquitously expressed in the adult (PubMed:10822263, PubMed:9479498).</text>
</comment>
<comment type="developmental stage">
    <text evidence="5">Expression is detected from embryonic day 7 and continues throughout development and into adulthood.</text>
</comment>
<comment type="domain">
    <text evidence="2">The SUMO interaction motifs (SIMs) mediates the binding to polysumoylated substrate.</text>
</comment>
<comment type="domain">
    <text evidence="1">The RING-type zinc finger domain is required for the ubiquitination of polysumoylated substrates.</text>
</comment>
<comment type="PTM">
    <text evidence="1">Sumoylated; conjugated by one or two SUMO1 moieties.</text>
</comment>
<comment type="PTM">
    <text evidence="8">Autoubiquitinated.</text>
</comment>
<organism>
    <name type="scientific">Mus musculus</name>
    <name type="common">Mouse</name>
    <dbReference type="NCBI Taxonomy" id="10090"/>
    <lineage>
        <taxon>Eukaryota</taxon>
        <taxon>Metazoa</taxon>
        <taxon>Chordata</taxon>
        <taxon>Craniata</taxon>
        <taxon>Vertebrata</taxon>
        <taxon>Euteleostomi</taxon>
        <taxon>Mammalia</taxon>
        <taxon>Eutheria</taxon>
        <taxon>Euarchontoglires</taxon>
        <taxon>Glires</taxon>
        <taxon>Rodentia</taxon>
        <taxon>Myomorpha</taxon>
        <taxon>Muroidea</taxon>
        <taxon>Muridae</taxon>
        <taxon>Murinae</taxon>
        <taxon>Mus</taxon>
        <taxon>Mus</taxon>
    </lineage>
</organism>
<name>RNF4_MOUSE</name>
<sequence>MSTRNPQRKRRGGTVNSRQTQKRTRETTSTPEVSLETEPIELVETVGDEIVDLTCESLEPVVVDLTHNDSVVIVEERRRPRRNGRRLRQDHADSCVVSSDDEELSRDKDVYVTTHTPRSTKDDGATGPRPSGTVSCPICMDGYSEIVQNGRLIVSTECGHVFCSQCLRDSLKNANTCPTCRKKINHKRYHPIYI</sequence>
<reference key="1">
    <citation type="journal article" date="2000" name="Dev. Dyn.">
        <title>Rnf4, a RING protein expressed in the developing nervous and reproductive systems, interacts with Gscl, a gene within the DiGeorge critical region.</title>
        <authorList>
            <person name="Galili N."/>
            <person name="Nayak S."/>
            <person name="Epstein J.A."/>
            <person name="Buck C.A."/>
        </authorList>
    </citation>
    <scope>NUCLEOTIDE SEQUENCE [MRNA]</scope>
    <scope>SUBCELLULAR LOCATION</scope>
    <scope>TISSUE SPECIFICITY</scope>
    <scope>DEVELOPMENTAL STAGE</scope>
    <scope>INTERACTION WITH GSC2</scope>
    <source>
        <strain>CD-1</strain>
        <tissue>Embryo</tissue>
    </source>
</reference>
<reference key="2">
    <citation type="journal article" date="2005" name="Science">
        <title>The transcriptional landscape of the mammalian genome.</title>
        <authorList>
            <person name="Carninci P."/>
            <person name="Kasukawa T."/>
            <person name="Katayama S."/>
            <person name="Gough J."/>
            <person name="Frith M.C."/>
            <person name="Maeda N."/>
            <person name="Oyama R."/>
            <person name="Ravasi T."/>
            <person name="Lenhard B."/>
            <person name="Wells C."/>
            <person name="Kodzius R."/>
            <person name="Shimokawa K."/>
            <person name="Bajic V.B."/>
            <person name="Brenner S.E."/>
            <person name="Batalov S."/>
            <person name="Forrest A.R."/>
            <person name="Zavolan M."/>
            <person name="Davis M.J."/>
            <person name="Wilming L.G."/>
            <person name="Aidinis V."/>
            <person name="Allen J.E."/>
            <person name="Ambesi-Impiombato A."/>
            <person name="Apweiler R."/>
            <person name="Aturaliya R.N."/>
            <person name="Bailey T.L."/>
            <person name="Bansal M."/>
            <person name="Baxter L."/>
            <person name="Beisel K.W."/>
            <person name="Bersano T."/>
            <person name="Bono H."/>
            <person name="Chalk A.M."/>
            <person name="Chiu K.P."/>
            <person name="Choudhary V."/>
            <person name="Christoffels A."/>
            <person name="Clutterbuck D.R."/>
            <person name="Crowe M.L."/>
            <person name="Dalla E."/>
            <person name="Dalrymple B.P."/>
            <person name="de Bono B."/>
            <person name="Della Gatta G."/>
            <person name="di Bernardo D."/>
            <person name="Down T."/>
            <person name="Engstrom P."/>
            <person name="Fagiolini M."/>
            <person name="Faulkner G."/>
            <person name="Fletcher C.F."/>
            <person name="Fukushima T."/>
            <person name="Furuno M."/>
            <person name="Futaki S."/>
            <person name="Gariboldi M."/>
            <person name="Georgii-Hemming P."/>
            <person name="Gingeras T.R."/>
            <person name="Gojobori T."/>
            <person name="Green R.E."/>
            <person name="Gustincich S."/>
            <person name="Harbers M."/>
            <person name="Hayashi Y."/>
            <person name="Hensch T.K."/>
            <person name="Hirokawa N."/>
            <person name="Hill D."/>
            <person name="Huminiecki L."/>
            <person name="Iacono M."/>
            <person name="Ikeo K."/>
            <person name="Iwama A."/>
            <person name="Ishikawa T."/>
            <person name="Jakt M."/>
            <person name="Kanapin A."/>
            <person name="Katoh M."/>
            <person name="Kawasawa Y."/>
            <person name="Kelso J."/>
            <person name="Kitamura H."/>
            <person name="Kitano H."/>
            <person name="Kollias G."/>
            <person name="Krishnan S.P."/>
            <person name="Kruger A."/>
            <person name="Kummerfeld S.K."/>
            <person name="Kurochkin I.V."/>
            <person name="Lareau L.F."/>
            <person name="Lazarevic D."/>
            <person name="Lipovich L."/>
            <person name="Liu J."/>
            <person name="Liuni S."/>
            <person name="McWilliam S."/>
            <person name="Madan Babu M."/>
            <person name="Madera M."/>
            <person name="Marchionni L."/>
            <person name="Matsuda H."/>
            <person name="Matsuzawa S."/>
            <person name="Miki H."/>
            <person name="Mignone F."/>
            <person name="Miyake S."/>
            <person name="Morris K."/>
            <person name="Mottagui-Tabar S."/>
            <person name="Mulder N."/>
            <person name="Nakano N."/>
            <person name="Nakauchi H."/>
            <person name="Ng P."/>
            <person name="Nilsson R."/>
            <person name="Nishiguchi S."/>
            <person name="Nishikawa S."/>
            <person name="Nori F."/>
            <person name="Ohara O."/>
            <person name="Okazaki Y."/>
            <person name="Orlando V."/>
            <person name="Pang K.C."/>
            <person name="Pavan W.J."/>
            <person name="Pavesi G."/>
            <person name="Pesole G."/>
            <person name="Petrovsky N."/>
            <person name="Piazza S."/>
            <person name="Reed J."/>
            <person name="Reid J.F."/>
            <person name="Ring B.Z."/>
            <person name="Ringwald M."/>
            <person name="Rost B."/>
            <person name="Ruan Y."/>
            <person name="Salzberg S.L."/>
            <person name="Sandelin A."/>
            <person name="Schneider C."/>
            <person name="Schoenbach C."/>
            <person name="Sekiguchi K."/>
            <person name="Semple C.A."/>
            <person name="Seno S."/>
            <person name="Sessa L."/>
            <person name="Sheng Y."/>
            <person name="Shibata Y."/>
            <person name="Shimada H."/>
            <person name="Shimada K."/>
            <person name="Silva D."/>
            <person name="Sinclair B."/>
            <person name="Sperling S."/>
            <person name="Stupka E."/>
            <person name="Sugiura K."/>
            <person name="Sultana R."/>
            <person name="Takenaka Y."/>
            <person name="Taki K."/>
            <person name="Tammoja K."/>
            <person name="Tan S.L."/>
            <person name="Tang S."/>
            <person name="Taylor M.S."/>
            <person name="Tegner J."/>
            <person name="Teichmann S.A."/>
            <person name="Ueda H.R."/>
            <person name="van Nimwegen E."/>
            <person name="Verardo R."/>
            <person name="Wei C.L."/>
            <person name="Yagi K."/>
            <person name="Yamanishi H."/>
            <person name="Zabarovsky E."/>
            <person name="Zhu S."/>
            <person name="Zimmer A."/>
            <person name="Hide W."/>
            <person name="Bult C."/>
            <person name="Grimmond S.M."/>
            <person name="Teasdale R.D."/>
            <person name="Liu E.T."/>
            <person name="Brusic V."/>
            <person name="Quackenbush J."/>
            <person name="Wahlestedt C."/>
            <person name="Mattick J.S."/>
            <person name="Hume D.A."/>
            <person name="Kai C."/>
            <person name="Sasaki D."/>
            <person name="Tomaru Y."/>
            <person name="Fukuda S."/>
            <person name="Kanamori-Katayama M."/>
            <person name="Suzuki M."/>
            <person name="Aoki J."/>
            <person name="Arakawa T."/>
            <person name="Iida J."/>
            <person name="Imamura K."/>
            <person name="Itoh M."/>
            <person name="Kato T."/>
            <person name="Kawaji H."/>
            <person name="Kawagashira N."/>
            <person name="Kawashima T."/>
            <person name="Kojima M."/>
            <person name="Kondo S."/>
            <person name="Konno H."/>
            <person name="Nakano K."/>
            <person name="Ninomiya N."/>
            <person name="Nishio T."/>
            <person name="Okada M."/>
            <person name="Plessy C."/>
            <person name="Shibata K."/>
            <person name="Shiraki T."/>
            <person name="Suzuki S."/>
            <person name="Tagami M."/>
            <person name="Waki K."/>
            <person name="Watahiki A."/>
            <person name="Okamura-Oho Y."/>
            <person name="Suzuki H."/>
            <person name="Kawai J."/>
            <person name="Hayashizaki Y."/>
        </authorList>
    </citation>
    <scope>NUCLEOTIDE SEQUENCE [LARGE SCALE MRNA]</scope>
    <source>
        <strain>C57BL/6J</strain>
        <tissue>Bone marrow</tissue>
        <tissue>Embryo</tissue>
        <tissue>Kidney</tissue>
        <tissue>Lymph node</tissue>
        <tissue>Visual cortex</tissue>
    </source>
</reference>
<reference key="3">
    <citation type="journal article" date="2004" name="Genome Res.">
        <title>The status, quality, and expansion of the NIH full-length cDNA project: the Mammalian Gene Collection (MGC).</title>
        <authorList>
            <consortium name="The MGC Project Team"/>
        </authorList>
    </citation>
    <scope>NUCLEOTIDE SEQUENCE [LARGE SCALE MRNA]</scope>
</reference>
<reference key="4">
    <citation type="journal article" date="1998" name="Genomics">
        <title>Identification and characterization of a novel RING-finger gene (RNF4) mapping at 4p16.3.</title>
        <authorList>
            <person name="Chiariotti L."/>
            <person name="Benvenuto G."/>
            <person name="Fedele M."/>
            <person name="Santoro M."/>
            <person name="Simeone A."/>
            <person name="Fusco A."/>
            <person name="Bruni C.B."/>
        </authorList>
    </citation>
    <scope>NUCLEOTIDE SEQUENCE [MRNA] OF 16-178</scope>
    <scope>TISSUE SPECIFICITY</scope>
    <source>
        <tissue>Embryo</tissue>
    </source>
</reference>
<reference key="5">
    <citation type="journal article" date="2000" name="J. Biol. Chem.">
        <title>Interaction between the transcription factor SPBP and the positive cofactor RNF4. An interplay between protein binding zinc fingers.</title>
        <authorList>
            <person name="Lyngsoe C."/>
            <person name="Bouteiller G."/>
            <person name="Damgaard C.K."/>
            <person name="Ryom D."/>
            <person name="Sanchez-Munoz S."/>
            <person name="Noerby P.L."/>
            <person name="Bonven B.J."/>
            <person name="Joergensen P."/>
        </authorList>
    </citation>
    <scope>SUBCELLULAR LOCATION</scope>
    <scope>INTERACTION WITH TCF20</scope>
</reference>
<reference key="6">
    <citation type="journal article" date="2003" name="J. Biol. Chem.">
        <title>The RING finger protein RNF4, a co-regulator of transcription, interacts with the TRPS1 transcription factor.</title>
        <authorList>
            <person name="Kaiser F.J."/>
            <person name="Moeroey T."/>
            <person name="Chang G.T."/>
            <person name="Horsthemke B."/>
            <person name="Luedecke H.J."/>
        </authorList>
    </citation>
    <scope>INTERACTION WITH TRPS1</scope>
</reference>
<reference key="7">
    <citation type="journal article" date="2007" name="Proc. Natl. Acad. Sci. U.S.A.">
        <title>Large-scale phosphorylation analysis of mouse liver.</title>
        <authorList>
            <person name="Villen J."/>
            <person name="Beausoleil S.A."/>
            <person name="Gerber S.A."/>
            <person name="Gygi S.P."/>
        </authorList>
    </citation>
    <scope>PHOSPHORYLATION [LARGE SCALE ANALYSIS] AT SER-98</scope>
    <scope>IDENTIFICATION BY MASS SPECTROMETRY [LARGE SCALE ANALYSIS]</scope>
    <source>
        <tissue>Liver</tissue>
    </source>
</reference>
<reference key="8">
    <citation type="journal article" date="2009" name="EMBO J.">
        <title>PARP-1 transcriptional activity is regulated by sumoylation upon heat shock.</title>
        <authorList>
            <person name="Martin N."/>
            <person name="Schwamborn K."/>
            <person name="Schreiber V."/>
            <person name="Werner A."/>
            <person name="Guillier C."/>
            <person name="Zhang X.D."/>
            <person name="Bischof O."/>
            <person name="Seeler J.S."/>
            <person name="Dejean A."/>
        </authorList>
    </citation>
    <scope>INTERACTION WITH PARP1</scope>
</reference>
<reference key="9">
    <citation type="journal article" date="2010" name="Biochem. J.">
        <title>RING domain dimerization is essential for RNF4 function.</title>
        <authorList>
            <person name="Liew C.W."/>
            <person name="Sun H."/>
            <person name="Hunter T."/>
            <person name="Day C.L."/>
        </authorList>
    </citation>
    <scope>FUNCTION</scope>
    <scope>PATHWAY</scope>
    <scope>AUTOUBIQUITINATION</scope>
    <scope>MUTAGENESIS OF VAL-134; SER-155; VAL-161 AND TYR-193</scope>
    <scope>SUBUNIT</scope>
</reference>
<reference key="10">
    <citation type="journal article" date="2010" name="Cell">
        <title>A tissue-specific atlas of mouse protein phosphorylation and expression.</title>
        <authorList>
            <person name="Huttlin E.L."/>
            <person name="Jedrychowski M.P."/>
            <person name="Elias J.E."/>
            <person name="Goswami T."/>
            <person name="Rad R."/>
            <person name="Beausoleil S.A."/>
            <person name="Villen J."/>
            <person name="Haas W."/>
            <person name="Sowa M.E."/>
            <person name="Gygi S.P."/>
        </authorList>
    </citation>
    <scope>PHOSPHORYLATION [LARGE SCALE ANALYSIS] AT SER-98 AND SER-99</scope>
    <scope>IDENTIFICATION BY MASS SPECTROMETRY [LARGE SCALE ANALYSIS]</scope>
    <source>
        <tissue>Brain</tissue>
        <tissue>Kidney</tissue>
        <tissue>Spleen</tissue>
    </source>
</reference>
<gene>
    <name evidence="10 12" type="primary">Rnf4</name>
</gene>
<evidence type="ECO:0000250" key="1">
    <source>
        <dbReference type="UniProtKB" id="O88846"/>
    </source>
</evidence>
<evidence type="ECO:0000250" key="2">
    <source>
        <dbReference type="UniProtKB" id="P78317"/>
    </source>
</evidence>
<evidence type="ECO:0000255" key="3">
    <source>
        <dbReference type="PROSITE-ProRule" id="PRU00175"/>
    </source>
</evidence>
<evidence type="ECO:0000256" key="4">
    <source>
        <dbReference type="SAM" id="MobiDB-lite"/>
    </source>
</evidence>
<evidence type="ECO:0000269" key="5">
    <source>
    </source>
</evidence>
<evidence type="ECO:0000269" key="6">
    <source>
    </source>
</evidence>
<evidence type="ECO:0000269" key="7">
    <source>
    </source>
</evidence>
<evidence type="ECO:0000269" key="8">
    <source>
    </source>
</evidence>
<evidence type="ECO:0000269" key="9">
    <source>
    </source>
</evidence>
<evidence type="ECO:0000303" key="10">
    <source>
    </source>
</evidence>
<evidence type="ECO:0000305" key="11"/>
<evidence type="ECO:0000312" key="12">
    <source>
        <dbReference type="MGI" id="MGI:1201691"/>
    </source>
</evidence>
<evidence type="ECO:0007744" key="13">
    <source>
    </source>
</evidence>
<evidence type="ECO:0007744" key="14">
    <source>
    </source>
</evidence>
<proteinExistence type="evidence at protein level"/>
<feature type="chain" id="PRO_0000056044" description="E3 ubiquitin-protein ligase RNF4">
    <location>
        <begin position="1"/>
        <end position="194"/>
    </location>
</feature>
<feature type="zinc finger region" description="RING-type" evidence="3">
    <location>
        <begin position="136"/>
        <end position="181"/>
    </location>
</feature>
<feature type="region of interest" description="Disordered" evidence="4">
    <location>
        <begin position="1"/>
        <end position="39"/>
    </location>
</feature>
<feature type="region of interest" description="Required for ubiquitination activity" evidence="7">
    <location>
        <begin position="1"/>
        <end position="20"/>
    </location>
</feature>
<feature type="region of interest" description="Mediates interaction with TRPS1" evidence="7">
    <location>
        <begin position="6"/>
        <end position="65"/>
    </location>
</feature>
<feature type="region of interest" description="Disordered" evidence="4">
    <location>
        <begin position="110"/>
        <end position="130"/>
    </location>
</feature>
<feature type="short sequence motif" description="SUMO interaction motif 1; mediates the binding to polysumoylated substrates" evidence="2">
    <location>
        <begin position="40"/>
        <end position="43"/>
    </location>
</feature>
<feature type="short sequence motif" description="SUMO interaction motif 2; mediates the binding to polysumoylated substrates" evidence="2">
    <location>
        <begin position="50"/>
        <end position="53"/>
    </location>
</feature>
<feature type="short sequence motif" description="SUMO interaction motif 3; mediates the binding to polysumoylated substrates" evidence="2">
    <location>
        <begin position="61"/>
        <end position="63"/>
    </location>
</feature>
<feature type="short sequence motif" description="SUMO interaction motif 4; mediates the binding to polysumoylated substrates" evidence="2">
    <location>
        <begin position="71"/>
        <end position="74"/>
    </location>
</feature>
<feature type="compositionally biased region" description="Basic residues" evidence="4">
    <location>
        <begin position="1"/>
        <end position="12"/>
    </location>
</feature>
<feature type="binding site" evidence="1">
    <location>
        <position position="136"/>
    </location>
    <ligand>
        <name>Zn(2+)</name>
        <dbReference type="ChEBI" id="CHEBI:29105"/>
        <label>1</label>
    </ligand>
</feature>
<feature type="binding site" evidence="1">
    <location>
        <position position="139"/>
    </location>
    <ligand>
        <name>Zn(2+)</name>
        <dbReference type="ChEBI" id="CHEBI:29105"/>
        <label>1</label>
    </ligand>
</feature>
<feature type="binding site" evidence="1">
    <location>
        <position position="158"/>
    </location>
    <ligand>
        <name>Zn(2+)</name>
        <dbReference type="ChEBI" id="CHEBI:29105"/>
        <label>2</label>
    </ligand>
</feature>
<feature type="binding site" evidence="1">
    <location>
        <position position="160"/>
    </location>
    <ligand>
        <name>Zn(2+)</name>
        <dbReference type="ChEBI" id="CHEBI:29105"/>
        <label>2</label>
    </ligand>
</feature>
<feature type="binding site" evidence="1">
    <location>
        <position position="163"/>
    </location>
    <ligand>
        <name>Zn(2+)</name>
        <dbReference type="ChEBI" id="CHEBI:29105"/>
        <label>1</label>
    </ligand>
</feature>
<feature type="binding site" evidence="1">
    <location>
        <position position="166"/>
    </location>
    <ligand>
        <name>Zn(2+)</name>
        <dbReference type="ChEBI" id="CHEBI:29105"/>
        <label>1</label>
    </ligand>
</feature>
<feature type="binding site" evidence="1">
    <location>
        <position position="177"/>
    </location>
    <ligand>
        <name>Zn(2+)</name>
        <dbReference type="ChEBI" id="CHEBI:29105"/>
        <label>2</label>
    </ligand>
</feature>
<feature type="binding site" evidence="1">
    <location>
        <position position="180"/>
    </location>
    <ligand>
        <name>Zn(2+)</name>
        <dbReference type="ChEBI" id="CHEBI:29105"/>
        <label>2</label>
    </ligand>
</feature>
<feature type="modified residue" description="Phosphoserine" evidence="13 14">
    <location>
        <position position="98"/>
    </location>
</feature>
<feature type="modified residue" description="Phosphoserine" evidence="14">
    <location>
        <position position="99"/>
    </location>
</feature>
<feature type="mutagenesis site" description="Abolishes homodimerization. Strongly reduced E3 ubiquitin ligase activity." evidence="8">
    <original>V</original>
    <variation>E</variation>
    <location>
        <position position="134"/>
    </location>
</feature>
<feature type="mutagenesis site" description="No effect." evidence="8">
    <original>S</original>
    <variation>A</variation>
    <location>
        <position position="155"/>
    </location>
</feature>
<feature type="mutagenesis site" description="Abolishes homodimerization. Strongly reduced E3 ubiquitin ligase activity." evidence="8">
    <original>S</original>
    <variation>E</variation>
    <location>
        <position position="155"/>
    </location>
</feature>
<feature type="mutagenesis site" description="Abolishes homodimerization. Strongly reduced E3 ubiquitin ligase activity." evidence="8">
    <original>V</original>
    <variation>A</variation>
    <location>
        <position position="161"/>
    </location>
</feature>
<feature type="mutagenesis site" description="Abolishes homodimerization. Loss of E3 ubiquitin ligase activity." evidence="8">
    <original>Y</original>
    <variation>A</variation>
    <location>
        <position position="193"/>
    </location>
</feature>
<protein>
    <recommendedName>
        <fullName evidence="11">E3 ubiquitin-protein ligase RNF4</fullName>
        <ecNumber evidence="2">2.3.2.27</ecNumber>
    </recommendedName>
    <alternativeName>
        <fullName evidence="11">RING finger protein 4</fullName>
    </alternativeName>
</protein>
<keyword id="KW-0002">3D-structure</keyword>
<keyword id="KW-0010">Activator</keyword>
<keyword id="KW-0963">Cytoplasm</keyword>
<keyword id="KW-0238">DNA-binding</keyword>
<keyword id="KW-0479">Metal-binding</keyword>
<keyword id="KW-0539">Nucleus</keyword>
<keyword id="KW-0597">Phosphoprotein</keyword>
<keyword id="KW-1185">Reference proteome</keyword>
<keyword id="KW-0804">Transcription</keyword>
<keyword id="KW-0805">Transcription regulation</keyword>
<keyword id="KW-0808">Transferase</keyword>
<keyword id="KW-0832">Ubl conjugation</keyword>
<keyword id="KW-0833">Ubl conjugation pathway</keyword>
<keyword id="KW-0862">Zinc</keyword>
<keyword id="KW-0863">Zinc-finger</keyword>